<reference key="1">
    <citation type="submission" date="2009-01" db="EMBL/GenBank/DDBJ databases">
        <title>Complete sequence of Geobacter sp. FRC-32.</title>
        <authorList>
            <consortium name="US DOE Joint Genome Institute"/>
            <person name="Lucas S."/>
            <person name="Copeland A."/>
            <person name="Lapidus A."/>
            <person name="Glavina del Rio T."/>
            <person name="Dalin E."/>
            <person name="Tice H."/>
            <person name="Bruce D."/>
            <person name="Goodwin L."/>
            <person name="Pitluck S."/>
            <person name="Saunders E."/>
            <person name="Brettin T."/>
            <person name="Detter J.C."/>
            <person name="Han C."/>
            <person name="Larimer F."/>
            <person name="Land M."/>
            <person name="Hauser L."/>
            <person name="Kyrpides N."/>
            <person name="Ovchinnikova G."/>
            <person name="Kostka J."/>
            <person name="Richardson P."/>
        </authorList>
    </citation>
    <scope>NUCLEOTIDE SEQUENCE [LARGE SCALE GENOMIC DNA]</scope>
    <source>
        <strain>DSM 22248 / JCM 15807 / FRC-32</strain>
    </source>
</reference>
<evidence type="ECO:0000255" key="1">
    <source>
        <dbReference type="HAMAP-Rule" id="MF_01306"/>
    </source>
</evidence>
<evidence type="ECO:0000305" key="2"/>
<keyword id="KW-1185">Reference proteome</keyword>
<keyword id="KW-0687">Ribonucleoprotein</keyword>
<keyword id="KW-0689">Ribosomal protein</keyword>
<keyword id="KW-0694">RNA-binding</keyword>
<keyword id="KW-0699">rRNA-binding</keyword>
<accession>B9M6F3</accession>
<name>RS4_GEODF</name>
<dbReference type="EMBL" id="CP001390">
    <property type="protein sequence ID" value="ACM21941.1"/>
    <property type="molecule type" value="Genomic_DNA"/>
</dbReference>
<dbReference type="RefSeq" id="WP_012648669.1">
    <property type="nucleotide sequence ID" value="NC_011979.1"/>
</dbReference>
<dbReference type="SMR" id="B9M6F3"/>
<dbReference type="STRING" id="316067.Geob_3600"/>
<dbReference type="KEGG" id="geo:Geob_3600"/>
<dbReference type="eggNOG" id="COG0522">
    <property type="taxonomic scope" value="Bacteria"/>
</dbReference>
<dbReference type="HOGENOM" id="CLU_092403_0_2_7"/>
<dbReference type="OrthoDB" id="9803672at2"/>
<dbReference type="Proteomes" id="UP000007721">
    <property type="component" value="Chromosome"/>
</dbReference>
<dbReference type="GO" id="GO:0015935">
    <property type="term" value="C:small ribosomal subunit"/>
    <property type="evidence" value="ECO:0007669"/>
    <property type="project" value="InterPro"/>
</dbReference>
<dbReference type="GO" id="GO:0019843">
    <property type="term" value="F:rRNA binding"/>
    <property type="evidence" value="ECO:0007669"/>
    <property type="project" value="UniProtKB-UniRule"/>
</dbReference>
<dbReference type="GO" id="GO:0003735">
    <property type="term" value="F:structural constituent of ribosome"/>
    <property type="evidence" value="ECO:0007669"/>
    <property type="project" value="InterPro"/>
</dbReference>
<dbReference type="GO" id="GO:0042274">
    <property type="term" value="P:ribosomal small subunit biogenesis"/>
    <property type="evidence" value="ECO:0007669"/>
    <property type="project" value="TreeGrafter"/>
</dbReference>
<dbReference type="GO" id="GO:0006412">
    <property type="term" value="P:translation"/>
    <property type="evidence" value="ECO:0007669"/>
    <property type="project" value="UniProtKB-UniRule"/>
</dbReference>
<dbReference type="CDD" id="cd00165">
    <property type="entry name" value="S4"/>
    <property type="match status" value="1"/>
</dbReference>
<dbReference type="FunFam" id="1.10.1050.10:FF:000001">
    <property type="entry name" value="30S ribosomal protein S4"/>
    <property type="match status" value="1"/>
</dbReference>
<dbReference type="FunFam" id="3.10.290.10:FF:000001">
    <property type="entry name" value="30S ribosomal protein S4"/>
    <property type="match status" value="1"/>
</dbReference>
<dbReference type="Gene3D" id="1.10.1050.10">
    <property type="entry name" value="Ribosomal Protein S4 Delta 41, Chain A, domain 1"/>
    <property type="match status" value="1"/>
</dbReference>
<dbReference type="Gene3D" id="3.10.290.10">
    <property type="entry name" value="RNA-binding S4 domain"/>
    <property type="match status" value="1"/>
</dbReference>
<dbReference type="HAMAP" id="MF_01306_B">
    <property type="entry name" value="Ribosomal_uS4_B"/>
    <property type="match status" value="1"/>
</dbReference>
<dbReference type="InterPro" id="IPR022801">
    <property type="entry name" value="Ribosomal_uS4"/>
</dbReference>
<dbReference type="InterPro" id="IPR005709">
    <property type="entry name" value="Ribosomal_uS4_bac-type"/>
</dbReference>
<dbReference type="InterPro" id="IPR018079">
    <property type="entry name" value="Ribosomal_uS4_CS"/>
</dbReference>
<dbReference type="InterPro" id="IPR001912">
    <property type="entry name" value="Ribosomal_uS4_N"/>
</dbReference>
<dbReference type="InterPro" id="IPR002942">
    <property type="entry name" value="S4_RNA-bd"/>
</dbReference>
<dbReference type="InterPro" id="IPR036986">
    <property type="entry name" value="S4_RNA-bd_sf"/>
</dbReference>
<dbReference type="NCBIfam" id="NF003717">
    <property type="entry name" value="PRK05327.1"/>
    <property type="match status" value="1"/>
</dbReference>
<dbReference type="NCBIfam" id="TIGR01017">
    <property type="entry name" value="rpsD_bact"/>
    <property type="match status" value="1"/>
</dbReference>
<dbReference type="PANTHER" id="PTHR11831">
    <property type="entry name" value="30S 40S RIBOSOMAL PROTEIN"/>
    <property type="match status" value="1"/>
</dbReference>
<dbReference type="PANTHER" id="PTHR11831:SF4">
    <property type="entry name" value="SMALL RIBOSOMAL SUBUNIT PROTEIN US4M"/>
    <property type="match status" value="1"/>
</dbReference>
<dbReference type="Pfam" id="PF00163">
    <property type="entry name" value="Ribosomal_S4"/>
    <property type="match status" value="1"/>
</dbReference>
<dbReference type="Pfam" id="PF01479">
    <property type="entry name" value="S4"/>
    <property type="match status" value="1"/>
</dbReference>
<dbReference type="SMART" id="SM01390">
    <property type="entry name" value="Ribosomal_S4"/>
    <property type="match status" value="1"/>
</dbReference>
<dbReference type="SMART" id="SM00363">
    <property type="entry name" value="S4"/>
    <property type="match status" value="1"/>
</dbReference>
<dbReference type="SUPFAM" id="SSF55174">
    <property type="entry name" value="Alpha-L RNA-binding motif"/>
    <property type="match status" value="1"/>
</dbReference>
<dbReference type="PROSITE" id="PS00632">
    <property type="entry name" value="RIBOSOMAL_S4"/>
    <property type="match status" value="1"/>
</dbReference>
<dbReference type="PROSITE" id="PS50889">
    <property type="entry name" value="S4"/>
    <property type="match status" value="1"/>
</dbReference>
<gene>
    <name evidence="1" type="primary">rpsD</name>
    <name type="ordered locus">Geob_3600</name>
</gene>
<proteinExistence type="inferred from homology"/>
<protein>
    <recommendedName>
        <fullName evidence="1">Small ribosomal subunit protein uS4</fullName>
    </recommendedName>
    <alternativeName>
        <fullName evidence="2">30S ribosomal protein S4</fullName>
    </alternativeName>
</protein>
<feature type="chain" id="PRO_1000165404" description="Small ribosomal subunit protein uS4">
    <location>
        <begin position="1"/>
        <end position="208"/>
    </location>
</feature>
<feature type="domain" description="S4 RNA-binding" evidence="1">
    <location>
        <begin position="98"/>
        <end position="158"/>
    </location>
</feature>
<sequence length="208" mass="24073">MARYTGPSCRLCRRENTELFLKGERCYTDKCAIKRRNYPPGQHGQGRSKTSDYGVQLREKQKVRRIYGILENQFRGYFERADRLKGVTGENLLFLLERRLDNIVYRLGFASSRIEARQLVRHGHFTLNGKKVTIPSIQVKTGDTVELREKSRKVASINESLEAVVRRGIPQWLELDKGAFKGSVKTLPVREDITMPIQEQLIVELYSK</sequence>
<comment type="function">
    <text evidence="1">One of the primary rRNA binding proteins, it binds directly to 16S rRNA where it nucleates assembly of the body of the 30S subunit.</text>
</comment>
<comment type="function">
    <text evidence="1">With S5 and S12 plays an important role in translational accuracy.</text>
</comment>
<comment type="subunit">
    <text evidence="1">Part of the 30S ribosomal subunit. Contacts protein S5. The interaction surface between S4 and S5 is involved in control of translational fidelity.</text>
</comment>
<comment type="similarity">
    <text evidence="1">Belongs to the universal ribosomal protein uS4 family.</text>
</comment>
<organism>
    <name type="scientific">Geotalea daltonii (strain DSM 22248 / JCM 15807 / FRC-32)</name>
    <name type="common">Geobacter daltonii</name>
    <dbReference type="NCBI Taxonomy" id="316067"/>
    <lineage>
        <taxon>Bacteria</taxon>
        <taxon>Pseudomonadati</taxon>
        <taxon>Thermodesulfobacteriota</taxon>
        <taxon>Desulfuromonadia</taxon>
        <taxon>Geobacterales</taxon>
        <taxon>Geobacteraceae</taxon>
        <taxon>Geotalea</taxon>
    </lineage>
</organism>